<organism>
    <name type="scientific">Ascaphus truei</name>
    <name type="common">Coastal tailed frog</name>
    <dbReference type="NCBI Taxonomy" id="8439"/>
    <lineage>
        <taxon>Eukaryota</taxon>
        <taxon>Metazoa</taxon>
        <taxon>Chordata</taxon>
        <taxon>Craniata</taxon>
        <taxon>Vertebrata</taxon>
        <taxon>Euteleostomi</taxon>
        <taxon>Amphibia</taxon>
        <taxon>Batrachia</taxon>
        <taxon>Anura</taxon>
        <taxon>Ascaphidae</taxon>
        <taxon>Ascaphus</taxon>
    </lineage>
</organism>
<protein>
    <recommendedName>
        <fullName>Tryptophyllin-3</fullName>
    </recommendedName>
</protein>
<keyword id="KW-0878">Amphibian defense peptide</keyword>
<keyword id="KW-0903">Direct protein sequencing</keyword>
<keyword id="KW-0964">Secreted</keyword>
<dbReference type="GO" id="GO:0005576">
    <property type="term" value="C:extracellular region"/>
    <property type="evidence" value="ECO:0000314"/>
    <property type="project" value="UniProtKB"/>
</dbReference>
<dbReference type="GO" id="GO:0006952">
    <property type="term" value="P:defense response"/>
    <property type="evidence" value="ECO:0000270"/>
    <property type="project" value="UniProtKB"/>
</dbReference>
<evidence type="ECO:0000269" key="1">
    <source>
    </source>
</evidence>
<evidence type="ECO:0000305" key="2"/>
<name>TY3_ASCTR</name>
<sequence>DPWDWV</sequence>
<reference evidence="2" key="1">
    <citation type="journal article" date="2005" name="Gen. Comp. Endocrinol.">
        <title>Bradykinin-related peptides and tryptophyllins in the skin secretions of the most primitive extant frog, Ascaphus truei.</title>
        <authorList>
            <person name="Conlon J.M."/>
            <person name="Jouenne T."/>
            <person name="Cosette P."/>
            <person name="Cosquer D."/>
            <person name="Vaudry H."/>
            <person name="Taylor C.K."/>
            <person name="Abel P.W."/>
        </authorList>
    </citation>
    <scope>PROTEIN SEQUENCE</scope>
    <scope>SUBCELLULAR LOCATION</scope>
    <scope>TISSUE SPECIFICITY</scope>
    <scope>MASS SPECTROMETRY</scope>
    <source>
        <tissue evidence="1">Skin secretion</tissue>
    </source>
</reference>
<accession>P84833</accession>
<proteinExistence type="evidence at protein level"/>
<feature type="peptide" id="PRO_0000233926" description="Tryptophyllin-3">
    <location>
        <begin position="1"/>
        <end position="6"/>
    </location>
</feature>
<comment type="function">
    <text>Putative defense peptide.</text>
</comment>
<comment type="subcellular location">
    <subcellularLocation>
        <location evidence="1">Secreted</location>
    </subcellularLocation>
</comment>
<comment type="tissue specificity">
    <text evidence="1">Expressed by the skin glands.</text>
</comment>
<comment type="mass spectrometry"/>
<comment type="similarity">
    <text evidence="2">Belongs to the frog skin active peptide (FSAP) family. Tryptophillin subfamily.</text>
</comment>